<keyword id="KW-0067">ATP-binding</keyword>
<keyword id="KW-0315">Glutamine amidotransferase</keyword>
<keyword id="KW-0436">Ligase</keyword>
<keyword id="KW-0460">Magnesium</keyword>
<keyword id="KW-0479">Metal-binding</keyword>
<keyword id="KW-0547">Nucleotide-binding</keyword>
<keyword id="KW-0665">Pyrimidine biosynthesis</keyword>
<keyword id="KW-1185">Reference proteome</keyword>
<sequence>MPRYIFITGGVVSSLGKGLASAAIGALLQARGYKVRLRKLDPYLNVDPGTMSPYQHGECYVTDDGAEADLDLGHYERFTGVPASQADNITTGRIYSRIIERERRGDYLGATVQVIPHVTDQIKQFVLSDAGDVDFVLCEIGGTVGDIEGLPFFEAIRQLGQELGEGNAVFLHVTLLPFIKVAGEMKTKPTQHSVKELRSIGIQPDILLCRCEIPIPPGDKRKIGLFCNVKESAVIEGRDAASLYDVPLEYHSQGLDTEILRCFGIDDAPAPDLSRWQGISETIANPDGEVTIGVVGKYVGLLDAYKSLIEALAHGGIANGVKVKLKWLDSEQFEKDDPFEPLEDVHGVLVPGGFGERGVEGKIAAARFARERKVPFFGICYGMQMAVLEAARNLAGVTDAVSTEFSDTGESVIGLLTEWTRGNEVETRKVGDDMGGTMRLGAYPAVLKDGSKVREIYGQAHIEERHRHRYEVNVGYKDRLEACGLTFSGLSPDGVLPEIVEIEDHPWFIGVQFHPELKSRPFEPHPLFASFIAAALHQSRMV</sequence>
<comment type="function">
    <text evidence="1">Catalyzes the ATP-dependent amination of UTP to CTP with either L-glutamine or ammonia as the source of nitrogen. Regulates intracellular CTP levels through interactions with the four ribonucleotide triphosphates.</text>
</comment>
<comment type="catalytic activity">
    <reaction evidence="1">
        <text>UTP + L-glutamine + ATP + H2O = CTP + L-glutamate + ADP + phosphate + 2 H(+)</text>
        <dbReference type="Rhea" id="RHEA:26426"/>
        <dbReference type="ChEBI" id="CHEBI:15377"/>
        <dbReference type="ChEBI" id="CHEBI:15378"/>
        <dbReference type="ChEBI" id="CHEBI:29985"/>
        <dbReference type="ChEBI" id="CHEBI:30616"/>
        <dbReference type="ChEBI" id="CHEBI:37563"/>
        <dbReference type="ChEBI" id="CHEBI:43474"/>
        <dbReference type="ChEBI" id="CHEBI:46398"/>
        <dbReference type="ChEBI" id="CHEBI:58359"/>
        <dbReference type="ChEBI" id="CHEBI:456216"/>
        <dbReference type="EC" id="6.3.4.2"/>
    </reaction>
</comment>
<comment type="catalytic activity">
    <reaction evidence="1">
        <text>L-glutamine + H2O = L-glutamate + NH4(+)</text>
        <dbReference type="Rhea" id="RHEA:15889"/>
        <dbReference type="ChEBI" id="CHEBI:15377"/>
        <dbReference type="ChEBI" id="CHEBI:28938"/>
        <dbReference type="ChEBI" id="CHEBI:29985"/>
        <dbReference type="ChEBI" id="CHEBI:58359"/>
    </reaction>
</comment>
<comment type="catalytic activity">
    <reaction evidence="1">
        <text>UTP + NH4(+) + ATP = CTP + ADP + phosphate + 2 H(+)</text>
        <dbReference type="Rhea" id="RHEA:16597"/>
        <dbReference type="ChEBI" id="CHEBI:15378"/>
        <dbReference type="ChEBI" id="CHEBI:28938"/>
        <dbReference type="ChEBI" id="CHEBI:30616"/>
        <dbReference type="ChEBI" id="CHEBI:37563"/>
        <dbReference type="ChEBI" id="CHEBI:43474"/>
        <dbReference type="ChEBI" id="CHEBI:46398"/>
        <dbReference type="ChEBI" id="CHEBI:456216"/>
    </reaction>
</comment>
<comment type="activity regulation">
    <text evidence="1">Allosterically activated by GTP, when glutamine is the substrate; GTP has no effect on the reaction when ammonia is the substrate. The allosteric effector GTP functions by stabilizing the protein conformation that binds the tetrahedral intermediate(s) formed during glutamine hydrolysis. Inhibited by the product CTP, via allosteric rather than competitive inhibition.</text>
</comment>
<comment type="pathway">
    <text evidence="1">Pyrimidine metabolism; CTP biosynthesis via de novo pathway; CTP from UDP: step 2/2.</text>
</comment>
<comment type="subunit">
    <text evidence="1">Homotetramer.</text>
</comment>
<comment type="miscellaneous">
    <text evidence="1">CTPSs have evolved a hybrid strategy for distinguishing between UTP and CTP. The overlapping regions of the product feedback inhibitory and substrate sites recognize a common feature in both compounds, the triphosphate moiety. To differentiate isosteric substrate and product pyrimidine rings, an additional pocket far from the expected kinase/ligase catalytic site, specifically recognizes the cytosine and ribose portions of the product inhibitor.</text>
</comment>
<comment type="similarity">
    <text evidence="1">Belongs to the CTP synthase family.</text>
</comment>
<protein>
    <recommendedName>
        <fullName evidence="1">CTP synthase</fullName>
        <ecNumber evidence="1">6.3.4.2</ecNumber>
    </recommendedName>
    <alternativeName>
        <fullName evidence="1">Cytidine 5'-triphosphate synthase</fullName>
    </alternativeName>
    <alternativeName>
        <fullName evidence="1">Cytidine triphosphate synthetase</fullName>
        <shortName evidence="1">CTP synthetase</shortName>
        <shortName evidence="1">CTPS</shortName>
    </alternativeName>
    <alternativeName>
        <fullName evidence="1">UTP--ammonia ligase</fullName>
    </alternativeName>
</protein>
<gene>
    <name evidence="1" type="primary">pyrG</name>
    <name type="ordered locus">Mmar10_1408</name>
</gene>
<evidence type="ECO:0000255" key="1">
    <source>
        <dbReference type="HAMAP-Rule" id="MF_01227"/>
    </source>
</evidence>
<name>PYRG_MARMM</name>
<accession>Q0APT7</accession>
<proteinExistence type="inferred from homology"/>
<organism>
    <name type="scientific">Maricaulis maris (strain MCS10)</name>
    <name type="common">Caulobacter maris</name>
    <dbReference type="NCBI Taxonomy" id="394221"/>
    <lineage>
        <taxon>Bacteria</taxon>
        <taxon>Pseudomonadati</taxon>
        <taxon>Pseudomonadota</taxon>
        <taxon>Alphaproteobacteria</taxon>
        <taxon>Maricaulales</taxon>
        <taxon>Maricaulaceae</taxon>
        <taxon>Maricaulis</taxon>
    </lineage>
</organism>
<feature type="chain" id="PRO_0000266150" description="CTP synthase">
    <location>
        <begin position="1"/>
        <end position="542"/>
    </location>
</feature>
<feature type="domain" description="Glutamine amidotransferase type-1" evidence="1">
    <location>
        <begin position="298"/>
        <end position="541"/>
    </location>
</feature>
<feature type="region of interest" description="Amidoligase domain" evidence="1">
    <location>
        <begin position="1"/>
        <end position="265"/>
    </location>
</feature>
<feature type="active site" description="Nucleophile; for glutamine hydrolysis" evidence="1">
    <location>
        <position position="380"/>
    </location>
</feature>
<feature type="active site" evidence="1">
    <location>
        <position position="514"/>
    </location>
</feature>
<feature type="active site" evidence="1">
    <location>
        <position position="516"/>
    </location>
</feature>
<feature type="binding site" evidence="1">
    <location>
        <position position="13"/>
    </location>
    <ligand>
        <name>CTP</name>
        <dbReference type="ChEBI" id="CHEBI:37563"/>
        <note>allosteric inhibitor</note>
    </ligand>
</feature>
<feature type="binding site" evidence="1">
    <location>
        <position position="13"/>
    </location>
    <ligand>
        <name>UTP</name>
        <dbReference type="ChEBI" id="CHEBI:46398"/>
    </ligand>
</feature>
<feature type="binding site" evidence="1">
    <location>
        <begin position="14"/>
        <end position="19"/>
    </location>
    <ligand>
        <name>ATP</name>
        <dbReference type="ChEBI" id="CHEBI:30616"/>
    </ligand>
</feature>
<feature type="binding site" evidence="1">
    <location>
        <position position="54"/>
    </location>
    <ligand>
        <name>L-glutamine</name>
        <dbReference type="ChEBI" id="CHEBI:58359"/>
    </ligand>
</feature>
<feature type="binding site" evidence="1">
    <location>
        <position position="71"/>
    </location>
    <ligand>
        <name>ATP</name>
        <dbReference type="ChEBI" id="CHEBI:30616"/>
    </ligand>
</feature>
<feature type="binding site" evidence="1">
    <location>
        <position position="71"/>
    </location>
    <ligand>
        <name>Mg(2+)</name>
        <dbReference type="ChEBI" id="CHEBI:18420"/>
    </ligand>
</feature>
<feature type="binding site" evidence="1">
    <location>
        <position position="139"/>
    </location>
    <ligand>
        <name>Mg(2+)</name>
        <dbReference type="ChEBI" id="CHEBI:18420"/>
    </ligand>
</feature>
<feature type="binding site" evidence="1">
    <location>
        <begin position="146"/>
        <end position="148"/>
    </location>
    <ligand>
        <name>CTP</name>
        <dbReference type="ChEBI" id="CHEBI:37563"/>
        <note>allosteric inhibitor</note>
    </ligand>
</feature>
<feature type="binding site" evidence="1">
    <location>
        <begin position="186"/>
        <end position="191"/>
    </location>
    <ligand>
        <name>CTP</name>
        <dbReference type="ChEBI" id="CHEBI:37563"/>
        <note>allosteric inhibitor</note>
    </ligand>
</feature>
<feature type="binding site" evidence="1">
    <location>
        <begin position="186"/>
        <end position="191"/>
    </location>
    <ligand>
        <name>UTP</name>
        <dbReference type="ChEBI" id="CHEBI:46398"/>
    </ligand>
</feature>
<feature type="binding site" evidence="1">
    <location>
        <position position="222"/>
    </location>
    <ligand>
        <name>CTP</name>
        <dbReference type="ChEBI" id="CHEBI:37563"/>
        <note>allosteric inhibitor</note>
    </ligand>
</feature>
<feature type="binding site" evidence="1">
    <location>
        <position position="222"/>
    </location>
    <ligand>
        <name>UTP</name>
        <dbReference type="ChEBI" id="CHEBI:46398"/>
    </ligand>
</feature>
<feature type="binding site" evidence="1">
    <location>
        <begin position="238"/>
        <end position="240"/>
    </location>
    <ligand>
        <name>ATP</name>
        <dbReference type="ChEBI" id="CHEBI:30616"/>
    </ligand>
</feature>
<feature type="binding site" evidence="1">
    <location>
        <position position="353"/>
    </location>
    <ligand>
        <name>L-glutamine</name>
        <dbReference type="ChEBI" id="CHEBI:58359"/>
    </ligand>
</feature>
<feature type="binding site" evidence="1">
    <location>
        <begin position="381"/>
        <end position="384"/>
    </location>
    <ligand>
        <name>L-glutamine</name>
        <dbReference type="ChEBI" id="CHEBI:58359"/>
    </ligand>
</feature>
<feature type="binding site" evidence="1">
    <location>
        <position position="404"/>
    </location>
    <ligand>
        <name>L-glutamine</name>
        <dbReference type="ChEBI" id="CHEBI:58359"/>
    </ligand>
</feature>
<feature type="binding site" evidence="1">
    <location>
        <position position="469"/>
    </location>
    <ligand>
        <name>L-glutamine</name>
        <dbReference type="ChEBI" id="CHEBI:58359"/>
    </ligand>
</feature>
<dbReference type="EC" id="6.3.4.2" evidence="1"/>
<dbReference type="EMBL" id="CP000449">
    <property type="protein sequence ID" value="ABI65700.1"/>
    <property type="molecule type" value="Genomic_DNA"/>
</dbReference>
<dbReference type="RefSeq" id="WP_011643347.1">
    <property type="nucleotide sequence ID" value="NC_008347.1"/>
</dbReference>
<dbReference type="SMR" id="Q0APT7"/>
<dbReference type="STRING" id="394221.Mmar10_1408"/>
<dbReference type="MEROPS" id="C26.964"/>
<dbReference type="KEGG" id="mmr:Mmar10_1408"/>
<dbReference type="eggNOG" id="COG0504">
    <property type="taxonomic scope" value="Bacteria"/>
</dbReference>
<dbReference type="HOGENOM" id="CLU_011675_5_0_5"/>
<dbReference type="OrthoDB" id="9801107at2"/>
<dbReference type="UniPathway" id="UPA00159">
    <property type="reaction ID" value="UER00277"/>
</dbReference>
<dbReference type="Proteomes" id="UP000001964">
    <property type="component" value="Chromosome"/>
</dbReference>
<dbReference type="GO" id="GO:0005829">
    <property type="term" value="C:cytosol"/>
    <property type="evidence" value="ECO:0007669"/>
    <property type="project" value="TreeGrafter"/>
</dbReference>
<dbReference type="GO" id="GO:0005524">
    <property type="term" value="F:ATP binding"/>
    <property type="evidence" value="ECO:0007669"/>
    <property type="project" value="UniProtKB-KW"/>
</dbReference>
<dbReference type="GO" id="GO:0003883">
    <property type="term" value="F:CTP synthase activity"/>
    <property type="evidence" value="ECO:0007669"/>
    <property type="project" value="UniProtKB-UniRule"/>
</dbReference>
<dbReference type="GO" id="GO:0004359">
    <property type="term" value="F:glutaminase activity"/>
    <property type="evidence" value="ECO:0007669"/>
    <property type="project" value="RHEA"/>
</dbReference>
<dbReference type="GO" id="GO:0042802">
    <property type="term" value="F:identical protein binding"/>
    <property type="evidence" value="ECO:0007669"/>
    <property type="project" value="TreeGrafter"/>
</dbReference>
<dbReference type="GO" id="GO:0046872">
    <property type="term" value="F:metal ion binding"/>
    <property type="evidence" value="ECO:0007669"/>
    <property type="project" value="UniProtKB-KW"/>
</dbReference>
<dbReference type="GO" id="GO:0044210">
    <property type="term" value="P:'de novo' CTP biosynthetic process"/>
    <property type="evidence" value="ECO:0007669"/>
    <property type="project" value="UniProtKB-UniRule"/>
</dbReference>
<dbReference type="GO" id="GO:0019856">
    <property type="term" value="P:pyrimidine nucleobase biosynthetic process"/>
    <property type="evidence" value="ECO:0007669"/>
    <property type="project" value="TreeGrafter"/>
</dbReference>
<dbReference type="CDD" id="cd03113">
    <property type="entry name" value="CTPS_N"/>
    <property type="match status" value="1"/>
</dbReference>
<dbReference type="CDD" id="cd01746">
    <property type="entry name" value="GATase1_CTP_Synthase"/>
    <property type="match status" value="1"/>
</dbReference>
<dbReference type="FunFam" id="3.40.50.300:FF:000009">
    <property type="entry name" value="CTP synthase"/>
    <property type="match status" value="1"/>
</dbReference>
<dbReference type="FunFam" id="3.40.50.880:FF:000002">
    <property type="entry name" value="CTP synthase"/>
    <property type="match status" value="1"/>
</dbReference>
<dbReference type="Gene3D" id="3.40.50.880">
    <property type="match status" value="1"/>
</dbReference>
<dbReference type="Gene3D" id="3.40.50.300">
    <property type="entry name" value="P-loop containing nucleotide triphosphate hydrolases"/>
    <property type="match status" value="1"/>
</dbReference>
<dbReference type="HAMAP" id="MF_01227">
    <property type="entry name" value="PyrG"/>
    <property type="match status" value="1"/>
</dbReference>
<dbReference type="InterPro" id="IPR029062">
    <property type="entry name" value="Class_I_gatase-like"/>
</dbReference>
<dbReference type="InterPro" id="IPR004468">
    <property type="entry name" value="CTP_synthase"/>
</dbReference>
<dbReference type="InterPro" id="IPR017456">
    <property type="entry name" value="CTP_synthase_N"/>
</dbReference>
<dbReference type="InterPro" id="IPR017926">
    <property type="entry name" value="GATASE"/>
</dbReference>
<dbReference type="InterPro" id="IPR033828">
    <property type="entry name" value="GATase1_CTP_Synthase"/>
</dbReference>
<dbReference type="InterPro" id="IPR027417">
    <property type="entry name" value="P-loop_NTPase"/>
</dbReference>
<dbReference type="NCBIfam" id="NF003792">
    <property type="entry name" value="PRK05380.1"/>
    <property type="match status" value="1"/>
</dbReference>
<dbReference type="NCBIfam" id="TIGR00337">
    <property type="entry name" value="PyrG"/>
    <property type="match status" value="1"/>
</dbReference>
<dbReference type="PANTHER" id="PTHR11550">
    <property type="entry name" value="CTP SYNTHASE"/>
    <property type="match status" value="1"/>
</dbReference>
<dbReference type="PANTHER" id="PTHR11550:SF0">
    <property type="entry name" value="CTP SYNTHASE-RELATED"/>
    <property type="match status" value="1"/>
</dbReference>
<dbReference type="Pfam" id="PF06418">
    <property type="entry name" value="CTP_synth_N"/>
    <property type="match status" value="1"/>
</dbReference>
<dbReference type="Pfam" id="PF00117">
    <property type="entry name" value="GATase"/>
    <property type="match status" value="1"/>
</dbReference>
<dbReference type="SUPFAM" id="SSF52317">
    <property type="entry name" value="Class I glutamine amidotransferase-like"/>
    <property type="match status" value="1"/>
</dbReference>
<dbReference type="SUPFAM" id="SSF52540">
    <property type="entry name" value="P-loop containing nucleoside triphosphate hydrolases"/>
    <property type="match status" value="1"/>
</dbReference>
<dbReference type="PROSITE" id="PS51273">
    <property type="entry name" value="GATASE_TYPE_1"/>
    <property type="match status" value="1"/>
</dbReference>
<reference key="1">
    <citation type="submission" date="2006-08" db="EMBL/GenBank/DDBJ databases">
        <title>Complete sequence of Maricaulis maris MCS10.</title>
        <authorList>
            <consortium name="US DOE Joint Genome Institute"/>
            <person name="Copeland A."/>
            <person name="Lucas S."/>
            <person name="Lapidus A."/>
            <person name="Barry K."/>
            <person name="Detter J.C."/>
            <person name="Glavina del Rio T."/>
            <person name="Hammon N."/>
            <person name="Israni S."/>
            <person name="Dalin E."/>
            <person name="Tice H."/>
            <person name="Pitluck S."/>
            <person name="Saunders E."/>
            <person name="Brettin T."/>
            <person name="Bruce D."/>
            <person name="Han C."/>
            <person name="Tapia R."/>
            <person name="Gilna P."/>
            <person name="Schmutz J."/>
            <person name="Larimer F."/>
            <person name="Land M."/>
            <person name="Hauser L."/>
            <person name="Kyrpides N."/>
            <person name="Mikhailova N."/>
            <person name="Viollier P."/>
            <person name="Stephens C."/>
            <person name="Richardson P."/>
        </authorList>
    </citation>
    <scope>NUCLEOTIDE SEQUENCE [LARGE SCALE GENOMIC DNA]</scope>
    <source>
        <strain>MCS10</strain>
    </source>
</reference>